<proteinExistence type="inferred from homology"/>
<protein>
    <recommendedName>
        <fullName>Inactive signal peptidase IA</fullName>
    </recommendedName>
</protein>
<reference key="1">
    <citation type="journal article" date="2001" name="Lancet">
        <title>Whole genome sequencing of meticillin-resistant Staphylococcus aureus.</title>
        <authorList>
            <person name="Kuroda M."/>
            <person name="Ohta T."/>
            <person name="Uchiyama I."/>
            <person name="Baba T."/>
            <person name="Yuzawa H."/>
            <person name="Kobayashi I."/>
            <person name="Cui L."/>
            <person name="Oguchi A."/>
            <person name="Aoki K."/>
            <person name="Nagai Y."/>
            <person name="Lian J.-Q."/>
            <person name="Ito T."/>
            <person name="Kanamori M."/>
            <person name="Matsumaru H."/>
            <person name="Maruyama A."/>
            <person name="Murakami H."/>
            <person name="Hosoyama A."/>
            <person name="Mizutani-Ui Y."/>
            <person name="Takahashi N.K."/>
            <person name="Sawano T."/>
            <person name="Inoue R."/>
            <person name="Kaito C."/>
            <person name="Sekimizu K."/>
            <person name="Hirakawa H."/>
            <person name="Kuhara S."/>
            <person name="Goto S."/>
            <person name="Yabuzaki J."/>
            <person name="Kanehisa M."/>
            <person name="Yamashita A."/>
            <person name="Oshima K."/>
            <person name="Furuya K."/>
            <person name="Yoshino C."/>
            <person name="Shiba T."/>
            <person name="Hattori M."/>
            <person name="Ogasawara N."/>
            <person name="Hayashi H."/>
            <person name="Hiramatsu K."/>
        </authorList>
    </citation>
    <scope>NUCLEOTIDE SEQUENCE [LARGE SCALE GENOMIC DNA]</scope>
    <source>
        <strain>N315</strain>
    </source>
</reference>
<gene>
    <name type="primary">spsA</name>
    <name type="ordered locus">SA0825</name>
</gene>
<dbReference type="EMBL" id="BA000018">
    <property type="protein sequence ID" value="BAB42064.1"/>
    <property type="molecule type" value="Genomic_DNA"/>
</dbReference>
<dbReference type="PIR" id="E89863">
    <property type="entry name" value="E89863"/>
</dbReference>
<dbReference type="SMR" id="P0A064"/>
<dbReference type="EnsemblBacteria" id="BAB42064">
    <property type="protein sequence ID" value="BAB42064"/>
    <property type="gene ID" value="BAB42064"/>
</dbReference>
<dbReference type="KEGG" id="sau:SA0825"/>
<dbReference type="HOGENOM" id="CLU_028723_5_0_9"/>
<dbReference type="GO" id="GO:0005886">
    <property type="term" value="C:plasma membrane"/>
    <property type="evidence" value="ECO:0007669"/>
    <property type="project" value="UniProtKB-SubCell"/>
</dbReference>
<dbReference type="GO" id="GO:0004252">
    <property type="term" value="F:serine-type endopeptidase activity"/>
    <property type="evidence" value="ECO:0007669"/>
    <property type="project" value="InterPro"/>
</dbReference>
<dbReference type="GO" id="GO:0006465">
    <property type="term" value="P:signal peptide processing"/>
    <property type="evidence" value="ECO:0007669"/>
    <property type="project" value="InterPro"/>
</dbReference>
<dbReference type="CDD" id="cd06530">
    <property type="entry name" value="S26_SPase_I"/>
    <property type="match status" value="1"/>
</dbReference>
<dbReference type="Gene3D" id="2.10.109.10">
    <property type="entry name" value="Umud Fragment, subunit A"/>
    <property type="match status" value="1"/>
</dbReference>
<dbReference type="InterPro" id="IPR036286">
    <property type="entry name" value="LexA/Signal_pep-like_sf"/>
</dbReference>
<dbReference type="InterPro" id="IPR000223">
    <property type="entry name" value="Pept_S26A_signal_pept_1"/>
</dbReference>
<dbReference type="InterPro" id="IPR019533">
    <property type="entry name" value="Peptidase_S26"/>
</dbReference>
<dbReference type="NCBIfam" id="TIGR02227">
    <property type="entry name" value="sigpep_I_bact"/>
    <property type="match status" value="1"/>
</dbReference>
<dbReference type="PANTHER" id="PTHR43390:SF1">
    <property type="entry name" value="CHLOROPLAST PROCESSING PEPTIDASE"/>
    <property type="match status" value="1"/>
</dbReference>
<dbReference type="PANTHER" id="PTHR43390">
    <property type="entry name" value="SIGNAL PEPTIDASE I"/>
    <property type="match status" value="1"/>
</dbReference>
<dbReference type="Pfam" id="PF10502">
    <property type="entry name" value="Peptidase_S26"/>
    <property type="match status" value="1"/>
</dbReference>
<dbReference type="PRINTS" id="PR00727">
    <property type="entry name" value="LEADERPTASE"/>
</dbReference>
<dbReference type="SUPFAM" id="SSF51306">
    <property type="entry name" value="LexA/Signal peptidase"/>
    <property type="match status" value="1"/>
</dbReference>
<keyword id="KW-1003">Cell membrane</keyword>
<keyword id="KW-0472">Membrane</keyword>
<keyword id="KW-0812">Transmembrane</keyword>
<keyword id="KW-1133">Transmembrane helix</keyword>
<name>LEPH_STAAN</name>
<evidence type="ECO:0000250" key="1"/>
<evidence type="ECO:0000255" key="2"/>
<evidence type="ECO:0000305" key="3"/>
<accession>P0A064</accession>
<accession>P72364</accession>
<sequence>MKKVVKYLISLILAIIIVLFVQTFVIVGHVIPNNDMSPTLNKGDRVIVNKIKVTFNQLNNGDIITYRRGNEIYTSRIIAKPGQSMAFRQGQLYRDDRPVDASYAKNRKIKDFSLRNFKELDGDIIPPNNFVVLNDHDNNQHDSRQFGLIDKKDIIGNISLRYYPFSKWTIQFKS</sequence>
<comment type="function">
    <text evidence="1">Catalytically inactive.</text>
</comment>
<comment type="subcellular location">
    <subcellularLocation>
        <location evidence="3">Cell membrane</location>
        <topology evidence="3">Single-pass type II membrane protein</topology>
    </subcellularLocation>
</comment>
<comment type="similarity">
    <text evidence="3">Belongs to the peptidase S26 family.</text>
</comment>
<organism>
    <name type="scientific">Staphylococcus aureus (strain N315)</name>
    <dbReference type="NCBI Taxonomy" id="158879"/>
    <lineage>
        <taxon>Bacteria</taxon>
        <taxon>Bacillati</taxon>
        <taxon>Bacillota</taxon>
        <taxon>Bacilli</taxon>
        <taxon>Bacillales</taxon>
        <taxon>Staphylococcaceae</taxon>
        <taxon>Staphylococcus</taxon>
    </lineage>
</organism>
<feature type="chain" id="PRO_0000109521" description="Inactive signal peptidase IA">
    <location>
        <begin position="1"/>
        <end position="174"/>
    </location>
</feature>
<feature type="topological domain" description="Cytoplasmic" evidence="2">
    <location>
        <begin position="1"/>
        <end position="7"/>
    </location>
</feature>
<feature type="transmembrane region" description="Helical" evidence="2">
    <location>
        <begin position="8"/>
        <end position="28"/>
    </location>
</feature>
<feature type="topological domain" description="Extracellular" evidence="2">
    <location>
        <begin position="29"/>
        <end position="174"/>
    </location>
</feature>